<gene>
    <name evidence="1" type="primary">leuS</name>
    <name type="ordered locus">HDEF_2038</name>
</gene>
<feature type="chain" id="PRO_1000202222" description="Leucine--tRNA ligase">
    <location>
        <begin position="1"/>
        <end position="869"/>
    </location>
</feature>
<feature type="short sequence motif" description="'HIGH' region">
    <location>
        <begin position="42"/>
        <end position="52"/>
    </location>
</feature>
<feature type="short sequence motif" description="'KMSKS' region">
    <location>
        <begin position="620"/>
        <end position="624"/>
    </location>
</feature>
<feature type="binding site" evidence="1">
    <location>
        <position position="623"/>
    </location>
    <ligand>
        <name>ATP</name>
        <dbReference type="ChEBI" id="CHEBI:30616"/>
    </ligand>
</feature>
<proteinExistence type="inferred from homology"/>
<reference key="1">
    <citation type="journal article" date="2009" name="Proc. Natl. Acad. Sci. U.S.A.">
        <title>Hamiltonella defensa, genome evolution of protective bacterial endosymbiont from pathogenic ancestors.</title>
        <authorList>
            <person name="Degnan P.H."/>
            <person name="Yu Y."/>
            <person name="Sisneros N."/>
            <person name="Wing R.A."/>
            <person name="Moran N.A."/>
        </authorList>
    </citation>
    <scope>NUCLEOTIDE SEQUENCE [LARGE SCALE GENOMIC DNA]</scope>
    <source>
        <strain>5AT</strain>
    </source>
</reference>
<name>SYL_HAMD5</name>
<dbReference type="EC" id="6.1.1.4" evidence="1"/>
<dbReference type="EMBL" id="CP001277">
    <property type="protein sequence ID" value="ACQ68610.1"/>
    <property type="molecule type" value="Genomic_DNA"/>
</dbReference>
<dbReference type="RefSeq" id="WP_015874363.1">
    <property type="nucleotide sequence ID" value="NC_012751.1"/>
</dbReference>
<dbReference type="SMR" id="C4K7R7"/>
<dbReference type="STRING" id="572265.HDEF_2038"/>
<dbReference type="GeneID" id="66261587"/>
<dbReference type="KEGG" id="hde:HDEF_2038"/>
<dbReference type="eggNOG" id="COG0495">
    <property type="taxonomic scope" value="Bacteria"/>
</dbReference>
<dbReference type="HOGENOM" id="CLU_004427_0_0_6"/>
<dbReference type="Proteomes" id="UP000002334">
    <property type="component" value="Chromosome"/>
</dbReference>
<dbReference type="GO" id="GO:0005829">
    <property type="term" value="C:cytosol"/>
    <property type="evidence" value="ECO:0007669"/>
    <property type="project" value="TreeGrafter"/>
</dbReference>
<dbReference type="GO" id="GO:0002161">
    <property type="term" value="F:aminoacyl-tRNA deacylase activity"/>
    <property type="evidence" value="ECO:0007669"/>
    <property type="project" value="InterPro"/>
</dbReference>
<dbReference type="GO" id="GO:0005524">
    <property type="term" value="F:ATP binding"/>
    <property type="evidence" value="ECO:0007669"/>
    <property type="project" value="UniProtKB-UniRule"/>
</dbReference>
<dbReference type="GO" id="GO:0004823">
    <property type="term" value="F:leucine-tRNA ligase activity"/>
    <property type="evidence" value="ECO:0007669"/>
    <property type="project" value="UniProtKB-UniRule"/>
</dbReference>
<dbReference type="GO" id="GO:0006429">
    <property type="term" value="P:leucyl-tRNA aminoacylation"/>
    <property type="evidence" value="ECO:0007669"/>
    <property type="project" value="UniProtKB-UniRule"/>
</dbReference>
<dbReference type="CDD" id="cd07958">
    <property type="entry name" value="Anticodon_Ia_Leu_BEm"/>
    <property type="match status" value="1"/>
</dbReference>
<dbReference type="CDD" id="cd00812">
    <property type="entry name" value="LeuRS_core"/>
    <property type="match status" value="1"/>
</dbReference>
<dbReference type="FunFam" id="1.10.730.10:FF:000002">
    <property type="entry name" value="Leucine--tRNA ligase"/>
    <property type="match status" value="1"/>
</dbReference>
<dbReference type="FunFam" id="2.20.28.290:FF:000001">
    <property type="entry name" value="Leucine--tRNA ligase"/>
    <property type="match status" value="1"/>
</dbReference>
<dbReference type="FunFam" id="3.40.50.620:FF:000003">
    <property type="entry name" value="Leucine--tRNA ligase"/>
    <property type="match status" value="1"/>
</dbReference>
<dbReference type="FunFam" id="3.40.50.620:FF:000124">
    <property type="entry name" value="Leucine--tRNA ligase"/>
    <property type="match status" value="1"/>
</dbReference>
<dbReference type="FunFam" id="3.90.740.10:FF:000012">
    <property type="entry name" value="Leucine--tRNA ligase"/>
    <property type="match status" value="1"/>
</dbReference>
<dbReference type="Gene3D" id="2.20.28.290">
    <property type="match status" value="1"/>
</dbReference>
<dbReference type="Gene3D" id="3.10.20.590">
    <property type="match status" value="1"/>
</dbReference>
<dbReference type="Gene3D" id="3.40.50.620">
    <property type="entry name" value="HUPs"/>
    <property type="match status" value="2"/>
</dbReference>
<dbReference type="Gene3D" id="1.10.730.10">
    <property type="entry name" value="Isoleucyl-tRNA Synthetase, Domain 1"/>
    <property type="match status" value="1"/>
</dbReference>
<dbReference type="Gene3D" id="3.90.740.10">
    <property type="entry name" value="Valyl/Leucyl/Isoleucyl-tRNA synthetase, editing domain"/>
    <property type="match status" value="1"/>
</dbReference>
<dbReference type="HAMAP" id="MF_00049_B">
    <property type="entry name" value="Leu_tRNA_synth_B"/>
    <property type="match status" value="1"/>
</dbReference>
<dbReference type="InterPro" id="IPR001412">
    <property type="entry name" value="aa-tRNA-synth_I_CS"/>
</dbReference>
<dbReference type="InterPro" id="IPR002300">
    <property type="entry name" value="aa-tRNA-synth_Ia"/>
</dbReference>
<dbReference type="InterPro" id="IPR002302">
    <property type="entry name" value="Leu-tRNA-ligase"/>
</dbReference>
<dbReference type="InterPro" id="IPR025709">
    <property type="entry name" value="Leu_tRNA-synth_edit"/>
</dbReference>
<dbReference type="InterPro" id="IPR013155">
    <property type="entry name" value="M/V/L/I-tRNA-synth_anticd-bd"/>
</dbReference>
<dbReference type="InterPro" id="IPR015413">
    <property type="entry name" value="Methionyl/Leucyl_tRNA_Synth"/>
</dbReference>
<dbReference type="InterPro" id="IPR014729">
    <property type="entry name" value="Rossmann-like_a/b/a_fold"/>
</dbReference>
<dbReference type="InterPro" id="IPR009080">
    <property type="entry name" value="tRNAsynth_Ia_anticodon-bd"/>
</dbReference>
<dbReference type="InterPro" id="IPR009008">
    <property type="entry name" value="Val/Leu/Ile-tRNA-synth_edit"/>
</dbReference>
<dbReference type="NCBIfam" id="TIGR00396">
    <property type="entry name" value="leuS_bact"/>
    <property type="match status" value="1"/>
</dbReference>
<dbReference type="PANTHER" id="PTHR43740:SF2">
    <property type="entry name" value="LEUCINE--TRNA LIGASE, MITOCHONDRIAL"/>
    <property type="match status" value="1"/>
</dbReference>
<dbReference type="PANTHER" id="PTHR43740">
    <property type="entry name" value="LEUCYL-TRNA SYNTHETASE"/>
    <property type="match status" value="1"/>
</dbReference>
<dbReference type="Pfam" id="PF08264">
    <property type="entry name" value="Anticodon_1"/>
    <property type="match status" value="1"/>
</dbReference>
<dbReference type="Pfam" id="PF00133">
    <property type="entry name" value="tRNA-synt_1"/>
    <property type="match status" value="2"/>
</dbReference>
<dbReference type="Pfam" id="PF13603">
    <property type="entry name" value="tRNA-synt_1_2"/>
    <property type="match status" value="1"/>
</dbReference>
<dbReference type="Pfam" id="PF09334">
    <property type="entry name" value="tRNA-synt_1g"/>
    <property type="match status" value="1"/>
</dbReference>
<dbReference type="PRINTS" id="PR00985">
    <property type="entry name" value="TRNASYNTHLEU"/>
</dbReference>
<dbReference type="SUPFAM" id="SSF47323">
    <property type="entry name" value="Anticodon-binding domain of a subclass of class I aminoacyl-tRNA synthetases"/>
    <property type="match status" value="1"/>
</dbReference>
<dbReference type="SUPFAM" id="SSF52374">
    <property type="entry name" value="Nucleotidylyl transferase"/>
    <property type="match status" value="1"/>
</dbReference>
<dbReference type="SUPFAM" id="SSF50677">
    <property type="entry name" value="ValRS/IleRS/LeuRS editing domain"/>
    <property type="match status" value="1"/>
</dbReference>
<dbReference type="PROSITE" id="PS00178">
    <property type="entry name" value="AA_TRNA_LIGASE_I"/>
    <property type="match status" value="1"/>
</dbReference>
<comment type="catalytic activity">
    <reaction evidence="1">
        <text>tRNA(Leu) + L-leucine + ATP = L-leucyl-tRNA(Leu) + AMP + diphosphate</text>
        <dbReference type="Rhea" id="RHEA:11688"/>
        <dbReference type="Rhea" id="RHEA-COMP:9613"/>
        <dbReference type="Rhea" id="RHEA-COMP:9622"/>
        <dbReference type="ChEBI" id="CHEBI:30616"/>
        <dbReference type="ChEBI" id="CHEBI:33019"/>
        <dbReference type="ChEBI" id="CHEBI:57427"/>
        <dbReference type="ChEBI" id="CHEBI:78442"/>
        <dbReference type="ChEBI" id="CHEBI:78494"/>
        <dbReference type="ChEBI" id="CHEBI:456215"/>
        <dbReference type="EC" id="6.1.1.4"/>
    </reaction>
</comment>
<comment type="subcellular location">
    <subcellularLocation>
        <location evidence="1">Cytoplasm</location>
    </subcellularLocation>
</comment>
<comment type="similarity">
    <text evidence="1">Belongs to the class-I aminoacyl-tRNA synthetase family.</text>
</comment>
<organism>
    <name type="scientific">Hamiltonella defensa subsp. Acyrthosiphon pisum (strain 5AT)</name>
    <dbReference type="NCBI Taxonomy" id="572265"/>
    <lineage>
        <taxon>Bacteria</taxon>
        <taxon>Pseudomonadati</taxon>
        <taxon>Pseudomonadota</taxon>
        <taxon>Gammaproteobacteria</taxon>
        <taxon>Enterobacterales</taxon>
        <taxon>Enterobacteriaceae</taxon>
        <taxon>aphid secondary symbionts</taxon>
        <taxon>Candidatus Hamiltonella</taxon>
    </lineage>
</organism>
<keyword id="KW-0030">Aminoacyl-tRNA synthetase</keyword>
<keyword id="KW-0067">ATP-binding</keyword>
<keyword id="KW-0963">Cytoplasm</keyword>
<keyword id="KW-0436">Ligase</keyword>
<keyword id="KW-0547">Nucleotide-binding</keyword>
<keyword id="KW-0648">Protein biosynthesis</keyword>
<protein>
    <recommendedName>
        <fullName evidence="1">Leucine--tRNA ligase</fullName>
        <ecNumber evidence="1">6.1.1.4</ecNumber>
    </recommendedName>
    <alternativeName>
        <fullName evidence="1">Leucyl-tRNA synthetase</fullName>
        <shortName evidence="1">LeuRS</shortName>
    </alternativeName>
</protein>
<accession>C4K7R7</accession>
<sequence length="869" mass="100422">MQDIYRHQDIESHVQRHWEQTQTFTVKEDPKKEKYYCLAMWPYPSGRLHMGHVRNYTITDVIARYQRMLGKNVLQPMGWDAFGLPAEGAAIKNKTSPIDWTKANIQYMKKQLQSLGFAYDWSRELTSCKPEYYRWEQWFFTQLYEKGLVYKKTSDVNWCPQDFTVLANEQVIDGRCWRCDSKVERKSIPQWFIKITAYADQLLDDLDELEHWPEQVKTMQRHWIGRSEGVEIRFPLDHDEKTDLTVYSTRPDTLMGVAFIAIAPDHFFSAEIAKNVPALATFIEECRHIKMAEAETATIEKKGIDTGFFALHPLTGKKIPIWVANFVLMEYGTGAVMGVPGHDQRDWEFATQYHLPIKAVILLEDGTEPDVQKKPLIEKGRLCHSGEFNGLSYQESCDRIIDKLVDLGTGQRKVNYRLRDWGVSRQRYWGAPIPMITLEDGRIIGTPEDQLPVILPEKTLIKDMINPLKADQDWAKTSVAGQLGIRETDTFDTFIESSWYYARYACPKYDQGMIEKAAANYWLPVDQYVGGIEHAIMHLLYFRFFHKLMRDQGLVDSKEPAKRLLCQGMVLADAFYYNAQNGERVWVSPTEVTVERDNKGQFLNAFDAQGRDLIHAGMSKMSKSKNNGIDPQAIVEKYGADTVRLFMMFASAPEMTLEWQESGLEGAYRFLKRLWRFVFDHVIQGPTQPLKKENLNSTQKNLRRNLHKTIAKVTDDIGRRQTFNTAIAAIMELMNQLYRAPTNTEQDRALIQEACISVIKMLYPFTPHISFILWQHLHQSPDETHPLNIDDSLWPVVDQNALIEDETLVVIQINGKMRAKITVPMNSTQQEVYESALQEPTVIKHLKGITPCHVIYVPNKLLNLVVNNE</sequence>
<evidence type="ECO:0000255" key="1">
    <source>
        <dbReference type="HAMAP-Rule" id="MF_00049"/>
    </source>
</evidence>